<evidence type="ECO:0000255" key="1">
    <source>
        <dbReference type="HAMAP-Rule" id="MF_01308"/>
    </source>
</evidence>
<evidence type="ECO:0000305" key="2"/>
<feature type="chain" id="PRO_0000216649" description="Potassium/proton antiporter CemA">
    <location>
        <begin position="1"/>
        <end position="392"/>
    </location>
</feature>
<feature type="transmembrane region" description="Helical" evidence="1">
    <location>
        <begin position="174"/>
        <end position="194"/>
    </location>
</feature>
<feature type="transmembrane region" description="Helical" evidence="1">
    <location>
        <begin position="269"/>
        <end position="289"/>
    </location>
</feature>
<feature type="transmembrane region" description="Helical" evidence="1">
    <location>
        <begin position="316"/>
        <end position="336"/>
    </location>
</feature>
<feature type="transmembrane region" description="Helical" evidence="1">
    <location>
        <begin position="352"/>
        <end position="372"/>
    </location>
</feature>
<protein>
    <recommendedName>
        <fullName evidence="1">Potassium/proton antiporter CemA</fullName>
    </recommendedName>
    <alternativeName>
        <fullName evidence="1">Chloroplast envelope membrane protein A</fullName>
        <shortName evidence="1">CemA</shortName>
    </alternativeName>
</protein>
<dbReference type="EMBL" id="AF137379">
    <property type="protein sequence ID" value="AAD54824.1"/>
    <property type="molecule type" value="Genomic_DNA"/>
</dbReference>
<dbReference type="RefSeq" id="NP_050853.1">
    <property type="nucleotide sequence ID" value="NC_000927.1"/>
</dbReference>
<dbReference type="SMR" id="Q9TKZ2"/>
<dbReference type="GeneID" id="801919"/>
<dbReference type="GO" id="GO:0009706">
    <property type="term" value="C:chloroplast inner membrane"/>
    <property type="evidence" value="ECO:0007669"/>
    <property type="project" value="UniProtKB-SubCell"/>
</dbReference>
<dbReference type="GO" id="GO:0015297">
    <property type="term" value="F:antiporter activity"/>
    <property type="evidence" value="ECO:0007669"/>
    <property type="project" value="UniProtKB-KW"/>
</dbReference>
<dbReference type="GO" id="GO:0015078">
    <property type="term" value="F:proton transmembrane transporter activity"/>
    <property type="evidence" value="ECO:0007669"/>
    <property type="project" value="UniProtKB-UniRule"/>
</dbReference>
<dbReference type="GO" id="GO:0006813">
    <property type="term" value="P:potassium ion transport"/>
    <property type="evidence" value="ECO:0007669"/>
    <property type="project" value="UniProtKB-UniRule"/>
</dbReference>
<dbReference type="HAMAP" id="MF_01308">
    <property type="entry name" value="CemA_PxcA"/>
    <property type="match status" value="1"/>
</dbReference>
<dbReference type="InterPro" id="IPR004282">
    <property type="entry name" value="CemA"/>
</dbReference>
<dbReference type="PANTHER" id="PTHR33650:SF2">
    <property type="entry name" value="CHLOROPLAST ENVELOPE MEMBRANE PROTEIN"/>
    <property type="match status" value="1"/>
</dbReference>
<dbReference type="PANTHER" id="PTHR33650">
    <property type="entry name" value="CHLOROPLAST ENVELOPE MEMBRANE PROTEIN-RELATED"/>
    <property type="match status" value="1"/>
</dbReference>
<dbReference type="Pfam" id="PF03040">
    <property type="entry name" value="CemA"/>
    <property type="match status" value="1"/>
</dbReference>
<name>CEMA_NEPOL</name>
<keyword id="KW-0050">Antiport</keyword>
<keyword id="KW-0150">Chloroplast</keyword>
<keyword id="KW-0375">Hydrogen ion transport</keyword>
<keyword id="KW-0406">Ion transport</keyword>
<keyword id="KW-0472">Membrane</keyword>
<keyword id="KW-0934">Plastid</keyword>
<keyword id="KW-1001">Plastid inner membrane</keyword>
<keyword id="KW-0630">Potassium</keyword>
<keyword id="KW-0633">Potassium transport</keyword>
<keyword id="KW-0812">Transmembrane</keyword>
<keyword id="KW-1133">Transmembrane helix</keyword>
<keyword id="KW-0813">Transport</keyword>
<accession>Q9TKZ2</accession>
<proteinExistence type="inferred from homology"/>
<comment type="function">
    <text evidence="1">Contributes to K(+)/H(+) antiport activity by supporting proton efflux to control proton extrusion and homeostasis in chloroplasts in a light-dependent manner to modulate photosynthesis. Prevents excessive induction of non-photochemical quenching (NPQ) under continuous-light conditions. Indirectly promotes efficient inorganic carbon uptake into chloroplasts.</text>
</comment>
<comment type="catalytic activity">
    <reaction evidence="1">
        <text>K(+)(in) + H(+)(out) = K(+)(out) + H(+)(in)</text>
        <dbReference type="Rhea" id="RHEA:29467"/>
        <dbReference type="ChEBI" id="CHEBI:15378"/>
        <dbReference type="ChEBI" id="CHEBI:29103"/>
    </reaction>
</comment>
<comment type="subcellular location">
    <subcellularLocation>
        <location evidence="1">Plastid</location>
        <location evidence="1">Chloroplast inner membrane</location>
        <topology evidence="1">Multi-pass membrane protein</topology>
    </subcellularLocation>
</comment>
<comment type="similarity">
    <text evidence="1 2">Belongs to the CemA family.</text>
</comment>
<sequence>MLAQSIRDCILWIRKTPDRALRAAKEAADLYQNIQQESRIYQNLRGANDATVILYLDKELSQYERTVKLRLQEFRVSSALLRGFEASQTESAETKKMVEEIEMAISRSQFLRSILSASSVKTHKPLAFEKTGIIPRSIPRTFDRLRRELLASSEDLVVQEFRISRYQTLTSLKFLASLIWIPWIVSWFLRVWWLEPTITMFWNQDQTQLFLHRSQEERALSDMRAFQEKVYFEVLVGEAPDPTPEVLQRRIQAKARDLAEASNQNSIESLANLGSDILACLILLAMLSLEKTKIAVLKSFLDELIYSLNDATKAFFLILVTDVFVGFHSTHGWEVILELLFAHFGFPESKKFIFMFVATFPVLLDTVFKYWIFRYLNHISPSTVAVYHNMNE</sequence>
<gene>
    <name evidence="1" type="primary">cemA</name>
</gene>
<organism>
    <name type="scientific">Nephroselmis olivacea</name>
    <name type="common">Green alga</name>
    <dbReference type="NCBI Taxonomy" id="31312"/>
    <lineage>
        <taxon>Eukaryota</taxon>
        <taxon>Viridiplantae</taxon>
        <taxon>Chlorophyta</taxon>
        <taxon>Nephroselmidophyceae</taxon>
        <taxon>Nephroselmidales</taxon>
        <taxon>Nephroselmidaceae</taxon>
        <taxon>Nephroselmis</taxon>
    </lineage>
</organism>
<reference key="1">
    <citation type="journal article" date="1999" name="Proc. Natl. Acad. Sci. U.S.A.">
        <title>The complete chloroplast DNA sequence of the green alga Nephroselmis olivacea: insights into the architecture of ancestral chloroplast genomes.</title>
        <authorList>
            <person name="Turmel M."/>
            <person name="Otis C."/>
            <person name="Lemieux C."/>
        </authorList>
    </citation>
    <scope>NUCLEOTIDE SEQUENCE [LARGE SCALE GENOMIC DNA]</scope>
    <source>
        <strain>NIES-484 / S-N-5-8</strain>
    </source>
</reference>
<geneLocation type="chloroplast"/>